<reference key="1">
    <citation type="journal article" date="2006" name="Gene">
        <title>Identification and characterization of cytokinin-signalling gene families in rice.</title>
        <authorList>
            <person name="Ito Y."/>
            <person name="Kurata N."/>
        </authorList>
    </citation>
    <scope>NUCLEOTIDE SEQUENCE [GENOMIC DNA]</scope>
    <source>
        <strain>cv. Nipponbare</strain>
    </source>
</reference>
<reference key="2">
    <citation type="journal article" date="2002" name="Nature">
        <title>The genome sequence and structure of rice chromosome 1.</title>
        <authorList>
            <person name="Sasaki T."/>
            <person name="Matsumoto T."/>
            <person name="Yamamoto K."/>
            <person name="Sakata K."/>
            <person name="Baba T."/>
            <person name="Katayose Y."/>
            <person name="Wu J."/>
            <person name="Niimura Y."/>
            <person name="Cheng Z."/>
            <person name="Nagamura Y."/>
            <person name="Antonio B.A."/>
            <person name="Kanamori H."/>
            <person name="Hosokawa S."/>
            <person name="Masukawa M."/>
            <person name="Arikawa K."/>
            <person name="Chiden Y."/>
            <person name="Hayashi M."/>
            <person name="Okamoto M."/>
            <person name="Ando T."/>
            <person name="Aoki H."/>
            <person name="Arita K."/>
            <person name="Hamada M."/>
            <person name="Harada C."/>
            <person name="Hijishita S."/>
            <person name="Honda M."/>
            <person name="Ichikawa Y."/>
            <person name="Idonuma A."/>
            <person name="Iijima M."/>
            <person name="Ikeda M."/>
            <person name="Ikeno M."/>
            <person name="Ito S."/>
            <person name="Ito T."/>
            <person name="Ito Y."/>
            <person name="Ito Y."/>
            <person name="Iwabuchi A."/>
            <person name="Kamiya K."/>
            <person name="Karasawa W."/>
            <person name="Katagiri S."/>
            <person name="Kikuta A."/>
            <person name="Kobayashi N."/>
            <person name="Kono I."/>
            <person name="Machita K."/>
            <person name="Maehara T."/>
            <person name="Mizuno H."/>
            <person name="Mizubayashi T."/>
            <person name="Mukai Y."/>
            <person name="Nagasaki H."/>
            <person name="Nakashima M."/>
            <person name="Nakama Y."/>
            <person name="Nakamichi Y."/>
            <person name="Nakamura M."/>
            <person name="Namiki N."/>
            <person name="Negishi M."/>
            <person name="Ohta I."/>
            <person name="Ono N."/>
            <person name="Saji S."/>
            <person name="Sakai K."/>
            <person name="Shibata M."/>
            <person name="Shimokawa T."/>
            <person name="Shomura A."/>
            <person name="Song J."/>
            <person name="Takazaki Y."/>
            <person name="Terasawa K."/>
            <person name="Tsuji K."/>
            <person name="Waki K."/>
            <person name="Yamagata H."/>
            <person name="Yamane H."/>
            <person name="Yoshiki S."/>
            <person name="Yoshihara R."/>
            <person name="Yukawa K."/>
            <person name="Zhong H."/>
            <person name="Iwama H."/>
            <person name="Endo T."/>
            <person name="Ito H."/>
            <person name="Hahn J.H."/>
            <person name="Kim H.-I."/>
            <person name="Eun M.-Y."/>
            <person name="Yano M."/>
            <person name="Jiang J."/>
            <person name="Gojobori T."/>
        </authorList>
    </citation>
    <scope>NUCLEOTIDE SEQUENCE [LARGE SCALE GENOMIC DNA]</scope>
    <source>
        <strain>cv. Nipponbare</strain>
    </source>
</reference>
<reference key="3">
    <citation type="journal article" date="2005" name="Nature">
        <title>The map-based sequence of the rice genome.</title>
        <authorList>
            <consortium name="International rice genome sequencing project (IRGSP)"/>
        </authorList>
    </citation>
    <scope>NUCLEOTIDE SEQUENCE [LARGE SCALE GENOMIC DNA]</scope>
    <source>
        <strain>cv. Nipponbare</strain>
    </source>
</reference>
<reference key="4">
    <citation type="journal article" date="2008" name="Nucleic Acids Res.">
        <title>The rice annotation project database (RAP-DB): 2008 update.</title>
        <authorList>
            <consortium name="The rice annotation project (RAP)"/>
        </authorList>
    </citation>
    <scope>GENOME REANNOTATION</scope>
    <source>
        <strain>cv. Nipponbare</strain>
    </source>
</reference>
<reference key="5">
    <citation type="journal article" date="2013" name="Rice">
        <title>Improvement of the Oryza sativa Nipponbare reference genome using next generation sequence and optical map data.</title>
        <authorList>
            <person name="Kawahara Y."/>
            <person name="de la Bastide M."/>
            <person name="Hamilton J.P."/>
            <person name="Kanamori H."/>
            <person name="McCombie W.R."/>
            <person name="Ouyang S."/>
            <person name="Schwartz D.C."/>
            <person name="Tanaka T."/>
            <person name="Wu J."/>
            <person name="Zhou S."/>
            <person name="Childs K.L."/>
            <person name="Davidson R.M."/>
            <person name="Lin H."/>
            <person name="Quesada-Ocampo L."/>
            <person name="Vaillancourt B."/>
            <person name="Sakai H."/>
            <person name="Lee S.S."/>
            <person name="Kim J."/>
            <person name="Numa H."/>
            <person name="Itoh T."/>
            <person name="Buell C.R."/>
            <person name="Matsumoto T."/>
        </authorList>
    </citation>
    <scope>GENOME REANNOTATION</scope>
    <source>
        <strain>cv. Nipponbare</strain>
    </source>
</reference>
<reference key="6">
    <citation type="journal article" date="2007" name="Plant Physiol.">
        <title>Nomenclature for two-component signaling elements of rice.</title>
        <authorList>
            <person name="Schaller G.E."/>
            <person name="Doi K."/>
            <person name="Hwang I."/>
            <person name="Kieber J.J."/>
            <person name="Khurana J.P."/>
            <person name="Kurata N."/>
            <person name="Mizuno T."/>
            <person name="Pareek A."/>
            <person name="Shiu S.H."/>
            <person name="Wu P."/>
            <person name="Yip W.K."/>
        </authorList>
    </citation>
    <scope>GENE FAMILY</scope>
    <scope>NOMENCLATURE</scope>
</reference>
<reference key="7">
    <citation type="journal article" date="2012" name="Plant Cell Physiol.">
        <title>Functional identification of OsHk6 as a homotypic cytokinin receptor in rice with preferential affinity for iP.</title>
        <authorList>
            <person name="Choi J."/>
            <person name="Lee J."/>
            <person name="Kim K."/>
            <person name="Cho M."/>
            <person name="Ryu H."/>
            <person name="An G."/>
            <person name="Hwang I."/>
        </authorList>
    </citation>
    <scope>TISSUE SPECIFICITY</scope>
    <scope>INDUCTION</scope>
</reference>
<proteinExistence type="evidence at transcript level"/>
<protein>
    <recommendedName>
        <fullName evidence="11">Probable histidine kinase 3</fullName>
        <shortName evidence="10">OsHK3</shortName>
        <ecNumber evidence="11">2.7.13.3</ecNumber>
    </recommendedName>
    <alternativeName>
        <fullName evidence="11">OsCRL2</fullName>
    </alternativeName>
</protein>
<organism>
    <name type="scientific">Oryza sativa subsp. japonica</name>
    <name type="common">Rice</name>
    <dbReference type="NCBI Taxonomy" id="39947"/>
    <lineage>
        <taxon>Eukaryota</taxon>
        <taxon>Viridiplantae</taxon>
        <taxon>Streptophyta</taxon>
        <taxon>Embryophyta</taxon>
        <taxon>Tracheophyta</taxon>
        <taxon>Spermatophyta</taxon>
        <taxon>Magnoliopsida</taxon>
        <taxon>Liliopsida</taxon>
        <taxon>Poales</taxon>
        <taxon>Poaceae</taxon>
        <taxon>BOP clade</taxon>
        <taxon>Oryzoideae</taxon>
        <taxon>Oryzeae</taxon>
        <taxon>Oryzinae</taxon>
        <taxon>Oryza</taxon>
        <taxon>Oryza sativa</taxon>
    </lineage>
</organism>
<comment type="function">
    <text evidence="1">Cytokinin receptor related to bacterial two-component regulators. Functions as a histidine kinase and transmits the stress signal to a downstream MAPK cascade.</text>
</comment>
<comment type="catalytic activity">
    <reaction evidence="11">
        <text>ATP + protein L-histidine = ADP + protein N-phospho-L-histidine.</text>
        <dbReference type="EC" id="2.7.13.3"/>
    </reaction>
</comment>
<comment type="subcellular location">
    <subcellularLocation>
        <location evidence="11">Cell membrane</location>
        <topology evidence="2">Multi-pass membrane protein</topology>
    </subcellularLocation>
</comment>
<comment type="tissue specificity">
    <text evidence="7">Highly expressed in young leaves and at lower levels in roots, mature leaves, stems and spikelets.</text>
</comment>
<comment type="induction">
    <text evidence="7">Slightly induced by cis-zeatin (cZ) and dihydrozeatin (DHZ) (PubMed:22642989).</text>
</comment>
<comment type="domain">
    <text evidence="11">Histidine-containing phosphotransfer domain (HPt) contains an active histidine that mediates the phosphotransfer.</text>
</comment>
<comment type="PTM">
    <text evidence="11">Activation probably requires a transfer of a phosphate group between a His in the transmitter domain and an Asp of the receiver domain.</text>
</comment>
<comment type="sequence caution" evidence="11">
    <conflict type="erroneous gene model prediction">
        <sequence resource="EMBL-CDS" id="BAD88305"/>
    </conflict>
</comment>
<comment type="sequence caution" evidence="11">
    <conflict type="erroneous gene model prediction">
        <sequence resource="EMBL-CDS" id="BAD88327"/>
    </conflict>
</comment>
<comment type="sequence caution" evidence="11">
    <conflict type="erroneous gene model prediction">
        <sequence resource="EMBL-CDS" id="BAH91444"/>
    </conflict>
</comment>
<name>OHK3_ORYSJ</name>
<feature type="chain" id="PRO_0000433807" description="Probable histidine kinase 3">
    <location>
        <begin position="1"/>
        <end position="1023"/>
    </location>
</feature>
<feature type="topological domain" description="Cytoplasmic" evidence="11">
    <location>
        <begin position="1"/>
        <end position="80"/>
    </location>
</feature>
<feature type="transmembrane region" description="Helical" evidence="2">
    <location>
        <begin position="81"/>
        <end position="101"/>
    </location>
</feature>
<feature type="topological domain" description="Extracellular" evidence="11">
    <location>
        <begin position="102"/>
        <end position="387"/>
    </location>
</feature>
<feature type="transmembrane region" description="Helical" evidence="2">
    <location>
        <begin position="388"/>
        <end position="408"/>
    </location>
</feature>
<feature type="topological domain" description="Cytoplasmic" evidence="11">
    <location>
        <begin position="409"/>
        <end position="1023"/>
    </location>
</feature>
<feature type="domain" description="CHASE" evidence="3">
    <location>
        <begin position="151"/>
        <end position="352"/>
    </location>
</feature>
<feature type="domain" description="Histidine kinase" evidence="4">
    <location>
        <begin position="445"/>
        <end position="715"/>
    </location>
</feature>
<feature type="domain" description="Response regulatory 1" evidence="5">
    <location>
        <begin position="732"/>
        <end position="854"/>
    </location>
</feature>
<feature type="domain" description="Response regulatory 2" evidence="5">
    <location>
        <begin position="880"/>
        <end position="1016"/>
    </location>
</feature>
<feature type="region of interest" description="Disordered" evidence="6">
    <location>
        <begin position="812"/>
        <end position="831"/>
    </location>
</feature>
<feature type="compositionally biased region" description="Polar residues" evidence="6">
    <location>
        <begin position="817"/>
        <end position="827"/>
    </location>
</feature>
<feature type="modified residue" description="Phosphohistidine; by autocatalysis" evidence="4">
    <location>
        <position position="448"/>
    </location>
</feature>
<feature type="modified residue" description="4-aspartylphosphate" evidence="5">
    <location>
        <position position="783"/>
    </location>
</feature>
<feature type="modified residue" description="4-aspartylphosphate" evidence="5">
    <location>
        <position position="930"/>
    </location>
</feature>
<keyword id="KW-1003">Cell membrane</keyword>
<keyword id="KW-0932">Cytokinin signaling pathway</keyword>
<keyword id="KW-0418">Kinase</keyword>
<keyword id="KW-0472">Membrane</keyword>
<keyword id="KW-0597">Phosphoprotein</keyword>
<keyword id="KW-1185">Reference proteome</keyword>
<keyword id="KW-0677">Repeat</keyword>
<keyword id="KW-0808">Transferase</keyword>
<keyword id="KW-0812">Transmembrane</keyword>
<keyword id="KW-1133">Transmembrane helix</keyword>
<keyword id="KW-0902">Two-component regulatory system</keyword>
<gene>
    <name evidence="9" type="primary">HK3</name>
    <name evidence="8" type="synonym">OHK2</name>
    <name evidence="14" type="ordered locus">Os01g0923700</name>
    <name evidence="11" type="ordered locus">LOC_Os01g69920</name>
    <name evidence="13" type="ORF">B1455F06.33</name>
    <name evidence="12" type="ORF">P0592G05.17</name>
</gene>
<sequence length="1023" mass="113219">MDEMSCGGGGGGARWKRARVAGMGEGKAGGGGGAAFLGLERVGMVVRMLPVPEKVSARARVVRGSLVAHFRGWRVVRETWWWVLLLWILAGSLGSFYLFLFMNAQSLDKRRDSLASMCDERARMLQDQFNVSMNHLQALAILVSTFHHSKTPSAIDQMTFARYAERTAFERPLTSGVAYAVRVTHGEREQFERQQGWAIKKMYSSSNKKQSSPGPGPGDAAVAEIREPAEEYAPVIFAQDAYKHVISFDMLSGNEDRDNILRARKSGKGVLTAPFKLLNNRLGVILTYTVYKYELPAYARPHERIQAAIGYLGGIFDIQALVEKLLKQLASQESIMVNVYDTTNESPISMYGDDTGSGMCHVSVLNFGDPSRKHEMHCRFEKKPPWPWLAITSSFGTLVIALLTGHIFQATVHRIAKVEDDFHKMSELKKRAEDADVAKSQFLATVSHEIRTPMNGVLGMLQMLMDTDLDTTQQDYVRTAQASGKALVSLINEVLDQAKIESGKLELETVPFDLRTVCDDILSLFCGKAQEKGLELAVYVSDQVPQILIGDPGRIRQIITNLVGNSIKFTERGHIYLTVHVVEEVMSCLEVETGIQNTNTLSGYPVANRRCSWESIRLFNRELHSSEKSFAPIASDSISLVISVEDTGVGIPFEAQSRVFTPFMQVGPSIARIHGGTGIGLSISKCLVGLMKGEIGFASKPHVGSTFTFTAVLMRAHCKGNDIKSSEFKGINALVVDHRPVRAKVTKYHLQRLGVKTELTAELNQFISKLNSGSLTAKLVLIDKETWLKESHCTPLLVNKLRNNDKPDSPKLFLLGSSASSPKGGSDTSREHNLNVIMKPLRASMLQVSLRRALGGVDKVHCRNGVVGNSTLGSLLHKKQIIVVDDNIVNLKVAAGALKKYGAEVTCADSGKKAITLLKPPHNFDACFMDIQMPEMDGFEATRRIRVMERDLNERIERGEAPPECASIQRWRTPILAMTADVIQATHEECLKSEMDGYVSKPFEGEQLYSEVARFFQNHDQVE</sequence>
<dbReference type="EC" id="2.7.13.3" evidence="11"/>
<dbReference type="EMBL" id="BR000244">
    <property type="protein sequence ID" value="FAA00248.1"/>
    <property type="molecule type" value="Genomic_DNA"/>
</dbReference>
<dbReference type="EMBL" id="AP004672">
    <property type="protein sequence ID" value="BAD88305.1"/>
    <property type="status" value="ALT_SEQ"/>
    <property type="molecule type" value="Genomic_DNA"/>
</dbReference>
<dbReference type="EMBL" id="AP006167">
    <property type="protein sequence ID" value="BAD88327.1"/>
    <property type="status" value="ALT_SEQ"/>
    <property type="molecule type" value="Genomic_DNA"/>
</dbReference>
<dbReference type="EMBL" id="AP008207">
    <property type="protein sequence ID" value="BAH91444.1"/>
    <property type="status" value="ALT_SEQ"/>
    <property type="molecule type" value="Genomic_DNA"/>
</dbReference>
<dbReference type="EMBL" id="AP014957">
    <property type="status" value="NOT_ANNOTATED_CDS"/>
    <property type="molecule type" value="Genomic_DNA"/>
</dbReference>
<dbReference type="RefSeq" id="XP_015649544.1">
    <property type="nucleotide sequence ID" value="XM_015794058.1"/>
</dbReference>
<dbReference type="SMR" id="A1A696"/>
<dbReference type="FunCoup" id="A1A696">
    <property type="interactions" value="363"/>
</dbReference>
<dbReference type="STRING" id="39947.A1A696"/>
<dbReference type="PaxDb" id="39947-A1A696"/>
<dbReference type="EnsemblPlants" id="Os01t0923700-04">
    <property type="protein sequence ID" value="Os01t0923700-04"/>
    <property type="gene ID" value="Os01g0923700"/>
</dbReference>
<dbReference type="Gramene" id="Os01t0923700-04">
    <property type="protein sequence ID" value="Os01t0923700-04"/>
    <property type="gene ID" value="Os01g0923700"/>
</dbReference>
<dbReference type="KEGG" id="dosa:Os01g0923700"/>
<dbReference type="eggNOG" id="KOG0519">
    <property type="taxonomic scope" value="Eukaryota"/>
</dbReference>
<dbReference type="HOGENOM" id="CLU_000445_104_15_1"/>
<dbReference type="InParanoid" id="A1A696"/>
<dbReference type="OrthoDB" id="10266508at2759"/>
<dbReference type="Proteomes" id="UP000000763">
    <property type="component" value="Chromosome 1"/>
</dbReference>
<dbReference type="Proteomes" id="UP000059680">
    <property type="component" value="Chromosome 1"/>
</dbReference>
<dbReference type="ExpressionAtlas" id="A1A696">
    <property type="expression patterns" value="baseline and differential"/>
</dbReference>
<dbReference type="GO" id="GO:0005634">
    <property type="term" value="C:nucleus"/>
    <property type="evidence" value="ECO:0000318"/>
    <property type="project" value="GO_Central"/>
</dbReference>
<dbReference type="GO" id="GO:0005886">
    <property type="term" value="C:plasma membrane"/>
    <property type="evidence" value="ECO:0007669"/>
    <property type="project" value="UniProtKB-SubCell"/>
</dbReference>
<dbReference type="GO" id="GO:0000155">
    <property type="term" value="F:phosphorelay sensor kinase activity"/>
    <property type="evidence" value="ECO:0007669"/>
    <property type="project" value="InterPro"/>
</dbReference>
<dbReference type="GO" id="GO:0043424">
    <property type="term" value="F:protein histidine kinase binding"/>
    <property type="evidence" value="ECO:0007669"/>
    <property type="project" value="EnsemblPlants"/>
</dbReference>
<dbReference type="GO" id="GO:0071215">
    <property type="term" value="P:cellular response to abscisic acid stimulus"/>
    <property type="evidence" value="ECO:0007669"/>
    <property type="project" value="EnsemblPlants"/>
</dbReference>
<dbReference type="GO" id="GO:0070417">
    <property type="term" value="P:cellular response to cold"/>
    <property type="evidence" value="ECO:0007669"/>
    <property type="project" value="EnsemblPlants"/>
</dbReference>
<dbReference type="GO" id="GO:0016036">
    <property type="term" value="P:cellular response to phosphate starvation"/>
    <property type="evidence" value="ECO:0007669"/>
    <property type="project" value="EnsemblPlants"/>
</dbReference>
<dbReference type="GO" id="GO:0071329">
    <property type="term" value="P:cellular response to sucrose stimulus"/>
    <property type="evidence" value="ECO:0007669"/>
    <property type="project" value="EnsemblPlants"/>
</dbReference>
<dbReference type="GO" id="GO:0009736">
    <property type="term" value="P:cytokinin-activated signaling pathway"/>
    <property type="evidence" value="ECO:0007669"/>
    <property type="project" value="UniProtKB-KW"/>
</dbReference>
<dbReference type="GO" id="GO:0042742">
    <property type="term" value="P:defense response to bacterium"/>
    <property type="evidence" value="ECO:0007669"/>
    <property type="project" value="EnsemblPlants"/>
</dbReference>
<dbReference type="GO" id="GO:0010150">
    <property type="term" value="P:leaf senescence"/>
    <property type="evidence" value="ECO:0007669"/>
    <property type="project" value="EnsemblPlants"/>
</dbReference>
<dbReference type="GO" id="GO:0034757">
    <property type="term" value="P:negative regulation of iron ion transport"/>
    <property type="evidence" value="ECO:0007669"/>
    <property type="project" value="EnsemblPlants"/>
</dbReference>
<dbReference type="GO" id="GO:0010087">
    <property type="term" value="P:phloem or xylem histogenesis"/>
    <property type="evidence" value="ECO:0007669"/>
    <property type="project" value="EnsemblPlants"/>
</dbReference>
<dbReference type="GO" id="GO:0010271">
    <property type="term" value="P:regulation of chlorophyll catabolic process"/>
    <property type="evidence" value="ECO:0007669"/>
    <property type="project" value="EnsemblPlants"/>
</dbReference>
<dbReference type="GO" id="GO:0009909">
    <property type="term" value="P:regulation of flower development"/>
    <property type="evidence" value="ECO:0007669"/>
    <property type="project" value="EnsemblPlants"/>
</dbReference>
<dbReference type="GO" id="GO:0048509">
    <property type="term" value="P:regulation of meristem development"/>
    <property type="evidence" value="ECO:0007669"/>
    <property type="project" value="EnsemblPlants"/>
</dbReference>
<dbReference type="GO" id="GO:0010029">
    <property type="term" value="P:regulation of seed germination"/>
    <property type="evidence" value="ECO:0007669"/>
    <property type="project" value="EnsemblPlants"/>
</dbReference>
<dbReference type="GO" id="GO:0009651">
    <property type="term" value="P:response to salt stress"/>
    <property type="evidence" value="ECO:0007669"/>
    <property type="project" value="EnsemblPlants"/>
</dbReference>
<dbReference type="GO" id="GO:0009414">
    <property type="term" value="P:response to water deprivation"/>
    <property type="evidence" value="ECO:0007669"/>
    <property type="project" value="EnsemblPlants"/>
</dbReference>
<dbReference type="GO" id="GO:0080117">
    <property type="term" value="P:secondary growth"/>
    <property type="evidence" value="ECO:0007669"/>
    <property type="project" value="EnsemblPlants"/>
</dbReference>
<dbReference type="CDD" id="cd16922">
    <property type="entry name" value="HATPase_EvgS-ArcB-TorS-like"/>
    <property type="match status" value="1"/>
</dbReference>
<dbReference type="CDD" id="cd00082">
    <property type="entry name" value="HisKA"/>
    <property type="match status" value="1"/>
</dbReference>
<dbReference type="CDD" id="cd17546">
    <property type="entry name" value="REC_hyHK_CKI1_RcsC-like"/>
    <property type="match status" value="1"/>
</dbReference>
<dbReference type="FunFam" id="3.40.50.2300:FF:000137">
    <property type="entry name" value="Histidine kinase 3"/>
    <property type="match status" value="1"/>
</dbReference>
<dbReference type="FunFam" id="1.10.287.130:FF:000015">
    <property type="entry name" value="Histidine kinase 4"/>
    <property type="match status" value="1"/>
</dbReference>
<dbReference type="FunFam" id="3.30.450.350:FF:000001">
    <property type="entry name" value="Histidine kinase 4"/>
    <property type="match status" value="1"/>
</dbReference>
<dbReference type="Gene3D" id="1.10.287.130">
    <property type="match status" value="1"/>
</dbReference>
<dbReference type="Gene3D" id="3.40.50.2300">
    <property type="match status" value="1"/>
</dbReference>
<dbReference type="Gene3D" id="6.10.250.1190">
    <property type="match status" value="1"/>
</dbReference>
<dbReference type="Gene3D" id="3.30.450.350">
    <property type="entry name" value="CHASE domain"/>
    <property type="match status" value="1"/>
</dbReference>
<dbReference type="Gene3D" id="3.30.565.10">
    <property type="entry name" value="Histidine kinase-like ATPase, C-terminal domain"/>
    <property type="match status" value="1"/>
</dbReference>
<dbReference type="InterPro" id="IPR050956">
    <property type="entry name" value="2C_system_His_kinase"/>
</dbReference>
<dbReference type="InterPro" id="IPR006189">
    <property type="entry name" value="CHASE_dom"/>
</dbReference>
<dbReference type="InterPro" id="IPR042240">
    <property type="entry name" value="CHASE_sf"/>
</dbReference>
<dbReference type="InterPro" id="IPR011006">
    <property type="entry name" value="CheY-like_superfamily"/>
</dbReference>
<dbReference type="InterPro" id="IPR036890">
    <property type="entry name" value="HATPase_C_sf"/>
</dbReference>
<dbReference type="InterPro" id="IPR005467">
    <property type="entry name" value="His_kinase_dom"/>
</dbReference>
<dbReference type="InterPro" id="IPR003661">
    <property type="entry name" value="HisK_dim/P_dom"/>
</dbReference>
<dbReference type="InterPro" id="IPR036097">
    <property type="entry name" value="HisK_dim/P_sf"/>
</dbReference>
<dbReference type="InterPro" id="IPR056839">
    <property type="entry name" value="Receiver_AHK4/CRE1_1st"/>
</dbReference>
<dbReference type="InterPro" id="IPR004358">
    <property type="entry name" value="Sig_transdc_His_kin-like_C"/>
</dbReference>
<dbReference type="InterPro" id="IPR001789">
    <property type="entry name" value="Sig_transdc_resp-reg_receiver"/>
</dbReference>
<dbReference type="PANTHER" id="PTHR43719:SF73">
    <property type="entry name" value="HISTIDINE KINASE 3"/>
    <property type="match status" value="1"/>
</dbReference>
<dbReference type="PANTHER" id="PTHR43719">
    <property type="entry name" value="TWO-COMPONENT HISTIDINE KINASE"/>
    <property type="match status" value="1"/>
</dbReference>
<dbReference type="Pfam" id="PF03924">
    <property type="entry name" value="CHASE"/>
    <property type="match status" value="1"/>
</dbReference>
<dbReference type="Pfam" id="PF02518">
    <property type="entry name" value="HATPase_c"/>
    <property type="match status" value="1"/>
</dbReference>
<dbReference type="Pfam" id="PF00512">
    <property type="entry name" value="HisKA"/>
    <property type="match status" value="1"/>
</dbReference>
<dbReference type="Pfam" id="PF24896">
    <property type="entry name" value="Receiver_CRE1"/>
    <property type="match status" value="1"/>
</dbReference>
<dbReference type="Pfam" id="PF00072">
    <property type="entry name" value="Response_reg"/>
    <property type="match status" value="1"/>
</dbReference>
<dbReference type="PRINTS" id="PR00344">
    <property type="entry name" value="BCTRLSENSOR"/>
</dbReference>
<dbReference type="SMART" id="SM01079">
    <property type="entry name" value="CHASE"/>
    <property type="match status" value="1"/>
</dbReference>
<dbReference type="SMART" id="SM00387">
    <property type="entry name" value="HATPase_c"/>
    <property type="match status" value="1"/>
</dbReference>
<dbReference type="SMART" id="SM00388">
    <property type="entry name" value="HisKA"/>
    <property type="match status" value="1"/>
</dbReference>
<dbReference type="SMART" id="SM00448">
    <property type="entry name" value="REC"/>
    <property type="match status" value="1"/>
</dbReference>
<dbReference type="SUPFAM" id="SSF55874">
    <property type="entry name" value="ATPase domain of HSP90 chaperone/DNA topoisomerase II/histidine kinase"/>
    <property type="match status" value="1"/>
</dbReference>
<dbReference type="SUPFAM" id="SSF52172">
    <property type="entry name" value="CheY-like"/>
    <property type="match status" value="2"/>
</dbReference>
<dbReference type="SUPFAM" id="SSF47384">
    <property type="entry name" value="Homodimeric domain of signal transducing histidine kinase"/>
    <property type="match status" value="1"/>
</dbReference>
<dbReference type="PROSITE" id="PS50839">
    <property type="entry name" value="CHASE"/>
    <property type="match status" value="1"/>
</dbReference>
<dbReference type="PROSITE" id="PS50109">
    <property type="entry name" value="HIS_KIN"/>
    <property type="match status" value="1"/>
</dbReference>
<dbReference type="PROSITE" id="PS50110">
    <property type="entry name" value="RESPONSE_REGULATORY"/>
    <property type="match status" value="2"/>
</dbReference>
<evidence type="ECO:0000250" key="1">
    <source>
        <dbReference type="UniProtKB" id="A1A698"/>
    </source>
</evidence>
<evidence type="ECO:0000255" key="2"/>
<evidence type="ECO:0000255" key="3">
    <source>
        <dbReference type="PROSITE-ProRule" id="PRU00049"/>
    </source>
</evidence>
<evidence type="ECO:0000255" key="4">
    <source>
        <dbReference type="PROSITE-ProRule" id="PRU00107"/>
    </source>
</evidence>
<evidence type="ECO:0000255" key="5">
    <source>
        <dbReference type="PROSITE-ProRule" id="PRU00169"/>
    </source>
</evidence>
<evidence type="ECO:0000256" key="6">
    <source>
        <dbReference type="SAM" id="MobiDB-lite"/>
    </source>
</evidence>
<evidence type="ECO:0000269" key="7">
    <source>
    </source>
</evidence>
<evidence type="ECO:0000303" key="8">
    <source>
    </source>
</evidence>
<evidence type="ECO:0000303" key="9">
    <source>
    </source>
</evidence>
<evidence type="ECO:0000303" key="10">
    <source>
    </source>
</evidence>
<evidence type="ECO:0000305" key="11"/>
<evidence type="ECO:0000312" key="12">
    <source>
        <dbReference type="EMBL" id="BAD88305.1"/>
    </source>
</evidence>
<evidence type="ECO:0000312" key="13">
    <source>
        <dbReference type="EMBL" id="BAD88327.1"/>
    </source>
</evidence>
<evidence type="ECO:0000312" key="14">
    <source>
        <dbReference type="EMBL" id="BAH91444.1"/>
    </source>
</evidence>
<accession>A1A696</accession>
<accession>C7IWB7</accession>
<accession>Q5JJP1</accession>